<reference key="1">
    <citation type="journal article" date="1994" name="Eur. J. Biochem.">
        <title>Molecular cloning and characterisation of a neutrophil chemotactic protein from porcine platelets.</title>
        <authorList>
            <person name="Power C.A."/>
            <person name="Proudfoot A.E.I."/>
            <person name="Magnenat E."/>
            <person name="Bacon K.B."/>
            <person name="Wells T.N.C."/>
        </authorList>
    </citation>
    <scope>NUCLEOTIDE SEQUENCE [MRNA]</scope>
    <scope>PROTEIN SEQUENCE OF 40-119</scope>
    <scope>MASS SPECTROMETRY</scope>
    <source>
        <tissue>Platelet</tissue>
    </source>
</reference>
<keyword id="KW-0145">Chemotaxis</keyword>
<keyword id="KW-0202">Cytokine</keyword>
<keyword id="KW-0903">Direct protein sequencing</keyword>
<keyword id="KW-1015">Disulfide bond</keyword>
<keyword id="KW-0339">Growth factor</keyword>
<keyword id="KW-0497">Mitogen</keyword>
<keyword id="KW-1185">Reference proteome</keyword>
<keyword id="KW-0964">Secreted</keyword>
<keyword id="KW-0732">Signal</keyword>
<protein>
    <recommendedName>
        <fullName>Platelet basic protein</fullName>
        <shortName>PBP</shortName>
    </recommendedName>
    <alternativeName>
        <fullName>C-X-C motif chemokine 7</fullName>
    </alternativeName>
    <alternativeName>
        <fullName>Small-inducible cytokine B7</fullName>
    </alternativeName>
</protein>
<accession>P43030</accession>
<evidence type="ECO:0000250" key="1"/>
<evidence type="ECO:0000269" key="2">
    <source>
    </source>
</evidence>
<evidence type="ECO:0000305" key="3"/>
<feature type="signal peptide" evidence="3">
    <location>
        <begin position="1"/>
        <end position="33"/>
    </location>
</feature>
<feature type="propeptide" id="PRO_0000005097" evidence="2">
    <location>
        <begin position="34"/>
        <end position="39"/>
    </location>
</feature>
<feature type="chain" id="PRO_0000005098" description="Platelet basic protein">
    <location>
        <begin position="40"/>
        <end position="119"/>
    </location>
</feature>
<feature type="disulfide bond" evidence="1">
    <location>
        <begin position="54"/>
        <end position="80"/>
    </location>
</feature>
<feature type="disulfide bond" evidence="1">
    <location>
        <begin position="56"/>
        <end position="96"/>
    </location>
</feature>
<organism>
    <name type="scientific">Sus scrofa</name>
    <name type="common">Pig</name>
    <dbReference type="NCBI Taxonomy" id="9823"/>
    <lineage>
        <taxon>Eukaryota</taxon>
        <taxon>Metazoa</taxon>
        <taxon>Chordata</taxon>
        <taxon>Craniata</taxon>
        <taxon>Vertebrata</taxon>
        <taxon>Euteleostomi</taxon>
        <taxon>Mammalia</taxon>
        <taxon>Eutheria</taxon>
        <taxon>Laurasiatheria</taxon>
        <taxon>Artiodactyla</taxon>
        <taxon>Suina</taxon>
        <taxon>Suidae</taxon>
        <taxon>Sus</taxon>
    </lineage>
</organism>
<gene>
    <name type="primary">PPBP</name>
    <name type="synonym">CXCL7</name>
    <name type="synonym">SCYB7</name>
</gene>
<comment type="function">
    <text>Chemoattractant factor for neutrophils.</text>
</comment>
<comment type="subcellular location">
    <subcellularLocation>
        <location>Secreted</location>
    </subcellularLocation>
</comment>
<comment type="mass spectrometry" mass="8597.5" method="Electrospray" evidence="2"/>
<comment type="similarity">
    <text evidence="3">Belongs to the intercrine alpha (chemokine CxC) family.</text>
</comment>
<dbReference type="EMBL" id="X77935">
    <property type="protein sequence ID" value="CAA54907.1"/>
    <property type="molecule type" value="mRNA"/>
</dbReference>
<dbReference type="PIR" id="S43460">
    <property type="entry name" value="S42881"/>
</dbReference>
<dbReference type="RefSeq" id="NP_999027.1">
    <property type="nucleotide sequence ID" value="NM_213862.2"/>
</dbReference>
<dbReference type="RefSeq" id="XP_003126210.1">
    <property type="nucleotide sequence ID" value="XM_003126162.3"/>
</dbReference>
<dbReference type="SMR" id="P43030"/>
<dbReference type="FunCoup" id="P43030">
    <property type="interactions" value="193"/>
</dbReference>
<dbReference type="STRING" id="9823.ENSSSCP00000071947"/>
<dbReference type="PaxDb" id="9823-ENSSSCP00000000259"/>
<dbReference type="Ensembl" id="ENSSSCT00000041161.2">
    <property type="protein sequence ID" value="ENSSSCP00000045908.1"/>
    <property type="gene ID" value="ENSSSCG00000037579.3"/>
</dbReference>
<dbReference type="Ensembl" id="ENSSSCT00015038321.1">
    <property type="protein sequence ID" value="ENSSSCP00015015209.1"/>
    <property type="gene ID" value="ENSSSCG00015028911.1"/>
</dbReference>
<dbReference type="Ensembl" id="ENSSSCT00030051075.1">
    <property type="protein sequence ID" value="ENSSSCP00030023244.1"/>
    <property type="gene ID" value="ENSSSCG00030036728.1"/>
</dbReference>
<dbReference type="Ensembl" id="ENSSSCT00055061081.1">
    <property type="protein sequence ID" value="ENSSSCP00055048969.1"/>
    <property type="gene ID" value="ENSSSCG00055030644.1"/>
</dbReference>
<dbReference type="Ensembl" id="ENSSSCT00060054732.1">
    <property type="protein sequence ID" value="ENSSSCP00060023346.1"/>
    <property type="gene ID" value="ENSSSCG00060040430.1"/>
</dbReference>
<dbReference type="Ensembl" id="ENSSSCT00070012108.1">
    <property type="protein sequence ID" value="ENSSSCP00070009970.1"/>
    <property type="gene ID" value="ENSSSCG00070006337.1"/>
</dbReference>
<dbReference type="Ensembl" id="ENSSSCT00105064682">
    <property type="protein sequence ID" value="ENSSSCP00105046051"/>
    <property type="gene ID" value="ENSSSCG00105033909"/>
</dbReference>
<dbReference type="Ensembl" id="ENSSSCT00110032288">
    <property type="protein sequence ID" value="ENSSSCP00110021887"/>
    <property type="gene ID" value="ENSSSCG00110016943"/>
</dbReference>
<dbReference type="Ensembl" id="ENSSSCT00115028776">
    <property type="protein sequence ID" value="ENSSSCP00115027303"/>
    <property type="gene ID" value="ENSSSCG00115016432"/>
</dbReference>
<dbReference type="GeneID" id="396870"/>
<dbReference type="KEGG" id="ssc:396870"/>
<dbReference type="CTD" id="5473"/>
<dbReference type="eggNOG" id="ENOG502S7MM">
    <property type="taxonomic scope" value="Eukaryota"/>
</dbReference>
<dbReference type="GeneTree" id="ENSGT00940000162559"/>
<dbReference type="HOGENOM" id="CLU_143902_1_1_1"/>
<dbReference type="InParanoid" id="P43030"/>
<dbReference type="OrthoDB" id="8872899at2759"/>
<dbReference type="TreeFam" id="TF333433"/>
<dbReference type="Reactome" id="R-SSC-114608">
    <property type="pathway name" value="Platelet degranulation"/>
</dbReference>
<dbReference type="Reactome" id="R-SSC-380108">
    <property type="pathway name" value="Chemokine receptors bind chemokines"/>
</dbReference>
<dbReference type="Reactome" id="R-SSC-418594">
    <property type="pathway name" value="G alpha (i) signalling events"/>
</dbReference>
<dbReference type="Reactome" id="R-SSC-6798695">
    <property type="pathway name" value="Neutrophil degranulation"/>
</dbReference>
<dbReference type="Proteomes" id="UP000008227">
    <property type="component" value="Chromosome 8"/>
</dbReference>
<dbReference type="Proteomes" id="UP000314985">
    <property type="component" value="Chromosome 8"/>
</dbReference>
<dbReference type="Proteomes" id="UP000694570">
    <property type="component" value="Unplaced"/>
</dbReference>
<dbReference type="Proteomes" id="UP000694571">
    <property type="component" value="Unplaced"/>
</dbReference>
<dbReference type="Proteomes" id="UP000694720">
    <property type="component" value="Unplaced"/>
</dbReference>
<dbReference type="Proteomes" id="UP000694722">
    <property type="component" value="Unplaced"/>
</dbReference>
<dbReference type="Proteomes" id="UP000694723">
    <property type="component" value="Unplaced"/>
</dbReference>
<dbReference type="Proteomes" id="UP000694724">
    <property type="component" value="Unplaced"/>
</dbReference>
<dbReference type="Proteomes" id="UP000694725">
    <property type="component" value="Unplaced"/>
</dbReference>
<dbReference type="Proteomes" id="UP000694726">
    <property type="component" value="Unplaced"/>
</dbReference>
<dbReference type="Proteomes" id="UP000694727">
    <property type="component" value="Unplaced"/>
</dbReference>
<dbReference type="Proteomes" id="UP000694728">
    <property type="component" value="Unplaced"/>
</dbReference>
<dbReference type="Bgee" id="ENSSSCG00000037579">
    <property type="expression patterns" value="Expressed in blood and 40 other cell types or tissues"/>
</dbReference>
<dbReference type="ExpressionAtlas" id="P43030">
    <property type="expression patterns" value="baseline and differential"/>
</dbReference>
<dbReference type="GO" id="GO:0005615">
    <property type="term" value="C:extracellular space"/>
    <property type="evidence" value="ECO:0000318"/>
    <property type="project" value="GO_Central"/>
</dbReference>
<dbReference type="GO" id="GO:0008009">
    <property type="term" value="F:chemokine activity"/>
    <property type="evidence" value="ECO:0000318"/>
    <property type="project" value="GO_Central"/>
</dbReference>
<dbReference type="GO" id="GO:0045236">
    <property type="term" value="F:CXCR chemokine receptor binding"/>
    <property type="evidence" value="ECO:0000318"/>
    <property type="project" value="GO_Central"/>
</dbReference>
<dbReference type="GO" id="GO:0008083">
    <property type="term" value="F:growth factor activity"/>
    <property type="evidence" value="ECO:0007669"/>
    <property type="project" value="UniProtKB-KW"/>
</dbReference>
<dbReference type="GO" id="GO:0061844">
    <property type="term" value="P:antimicrobial humoral immune response mediated by antimicrobial peptide"/>
    <property type="evidence" value="ECO:0000318"/>
    <property type="project" value="GO_Central"/>
</dbReference>
<dbReference type="GO" id="GO:0071222">
    <property type="term" value="P:cellular response to lipopolysaccharide"/>
    <property type="evidence" value="ECO:0000318"/>
    <property type="project" value="GO_Central"/>
</dbReference>
<dbReference type="GO" id="GO:0006954">
    <property type="term" value="P:inflammatory response"/>
    <property type="evidence" value="ECO:0000318"/>
    <property type="project" value="GO_Central"/>
</dbReference>
<dbReference type="GO" id="GO:0030593">
    <property type="term" value="P:neutrophil chemotaxis"/>
    <property type="evidence" value="ECO:0000318"/>
    <property type="project" value="GO_Central"/>
</dbReference>
<dbReference type="GO" id="GO:0051781">
    <property type="term" value="P:positive regulation of cell division"/>
    <property type="evidence" value="ECO:0007669"/>
    <property type="project" value="UniProtKB-KW"/>
</dbReference>
<dbReference type="CDD" id="cd00273">
    <property type="entry name" value="Chemokine_CXC"/>
    <property type="match status" value="1"/>
</dbReference>
<dbReference type="FunFam" id="2.40.50.40:FF:000004">
    <property type="entry name" value="C-X-C motif chemokine"/>
    <property type="match status" value="1"/>
</dbReference>
<dbReference type="Gene3D" id="2.40.50.40">
    <property type="match status" value="1"/>
</dbReference>
<dbReference type="InterPro" id="IPR039809">
    <property type="entry name" value="Chemokine_b/g/d"/>
</dbReference>
<dbReference type="InterPro" id="IPR001089">
    <property type="entry name" value="Chemokine_CXC"/>
</dbReference>
<dbReference type="InterPro" id="IPR018048">
    <property type="entry name" value="Chemokine_CXC_CS"/>
</dbReference>
<dbReference type="InterPro" id="IPR001811">
    <property type="entry name" value="Chemokine_IL8-like_dom"/>
</dbReference>
<dbReference type="InterPro" id="IPR033899">
    <property type="entry name" value="CXC_Chemokine_domain"/>
</dbReference>
<dbReference type="InterPro" id="IPR036048">
    <property type="entry name" value="Interleukin_8-like_sf"/>
</dbReference>
<dbReference type="PANTHER" id="PTHR12015:SF198">
    <property type="entry name" value="PLATELET BASIC PROTEIN"/>
    <property type="match status" value="1"/>
</dbReference>
<dbReference type="PANTHER" id="PTHR12015">
    <property type="entry name" value="SMALL INDUCIBLE CYTOKINE A"/>
    <property type="match status" value="1"/>
</dbReference>
<dbReference type="Pfam" id="PF00048">
    <property type="entry name" value="IL8"/>
    <property type="match status" value="1"/>
</dbReference>
<dbReference type="PRINTS" id="PR00436">
    <property type="entry name" value="INTERLEUKIN8"/>
</dbReference>
<dbReference type="PRINTS" id="PR00437">
    <property type="entry name" value="SMALLCYTKCXC"/>
</dbReference>
<dbReference type="SMART" id="SM00199">
    <property type="entry name" value="SCY"/>
    <property type="match status" value="1"/>
</dbReference>
<dbReference type="SUPFAM" id="SSF54117">
    <property type="entry name" value="Interleukin 8-like chemokines"/>
    <property type="match status" value="1"/>
</dbReference>
<dbReference type="PROSITE" id="PS00471">
    <property type="entry name" value="SMALL_CYTOKINES_CXC"/>
    <property type="match status" value="1"/>
</dbReference>
<name>CXCL7_PIG</name>
<sequence length="119" mass="12615">MSLRLGAISSCTTSSPFPVLQVLLPLSLLLTTLVPATMGAAKIEGRMAHVELRCLCLNTVSGIHPSNIQSLEVIRAGAHCAKVEVIATLKNDKKICLDPEAPRIKKIVQKIMEDGGSAA</sequence>
<proteinExistence type="evidence at protein level"/>